<protein>
    <recommendedName>
        <fullName>Reaction center protein L chain</fullName>
    </recommendedName>
    <alternativeName>
        <fullName>Photosynthetic reaction center L subunit</fullName>
    </alternativeName>
</protein>
<accession>P0DJO2</accession>
<accession>P51760</accession>
<sequence length="279" mass="31328">MAMLSFEKKYRVRGGTLVGGDLFDFWVGPFYVGFFGVTTLFFSVLGTALIIWGASQGPTWNLWQISIAPPDLKYGLGVAPLMEGGLWQIITVCAIGAFVSWALREVEICRKLGMQYHVPIAFSFAILAYVTLVVIRPILMGAWGHGFPYGIFSHLDWVSNVGYQYLHFHYNPAHMLAITFFFTTTLAMSMHGGLILSAANPKKGEPMKTTDHEDTFFRDAVGYSIGSLGIHRLGLFLALSAAFWSAVCIVISGPFWTRGWPEWWGWWLNLPIWSQWPLN</sequence>
<gene>
    <name type="primary">pufL</name>
</gene>
<evidence type="ECO:0000250" key="1"/>
<evidence type="ECO:0000255" key="2"/>
<evidence type="ECO:0000269" key="3">
    <source>
    </source>
</evidence>
<evidence type="ECO:0000305" key="4"/>
<comment type="function">
    <text>The reaction center is a membrane-bound complex that mediates the initial photochemical event in the electron transfer process of photosynthesis.</text>
</comment>
<comment type="subunit">
    <text>Reaction center is composed of four bacteriochlorophylls, two bacteriopheophytins, two ubiquinones, one iron, and three highly hydrophobic polypeptide chains (designated L, M, and H).</text>
</comment>
<comment type="subcellular location">
    <subcellularLocation>
        <location evidence="1">Cell inner membrane</location>
        <topology evidence="1">Multi-pass membrane protein</topology>
    </subcellularLocation>
</comment>
<comment type="similarity">
    <text evidence="4">Belongs to the reaction center PufL/M/PsbA/D family.</text>
</comment>
<feature type="initiator methionine" description="Removed" evidence="1">
    <location>
        <position position="1"/>
    </location>
</feature>
<feature type="chain" id="PRO_0000090404" description="Reaction center protein L chain">
    <location>
        <begin position="2"/>
        <end position="279"/>
    </location>
</feature>
<feature type="transmembrane region" description="Helical" evidence="2">
    <location>
        <begin position="33"/>
        <end position="56"/>
    </location>
</feature>
<feature type="transmembrane region" description="Helical" evidence="2">
    <location>
        <begin position="85"/>
        <end position="113"/>
    </location>
</feature>
<feature type="transmembrane region" description="Helical" evidence="2">
    <location>
        <begin position="116"/>
        <end position="141"/>
    </location>
</feature>
<feature type="transmembrane region" description="Helical" evidence="2">
    <location>
        <begin position="171"/>
        <end position="200"/>
    </location>
</feature>
<feature type="transmembrane region" description="Helical" evidence="2">
    <location>
        <begin position="226"/>
        <end position="252"/>
    </location>
</feature>
<feature type="binding site" description="axial binding residue" evidence="1">
    <location>
        <position position="154"/>
    </location>
    <ligand>
        <name>(7R,8Z)-bacteriochlorophyll b</name>
        <dbReference type="ChEBI" id="CHEBI:30034"/>
    </ligand>
    <ligandPart>
        <name>Mg</name>
        <dbReference type="ChEBI" id="CHEBI:25107"/>
    </ligandPart>
</feature>
<feature type="binding site" description="axial binding residue" evidence="1">
    <location>
        <position position="174"/>
    </location>
    <ligand>
        <name>(7R,8Z)-bacteriochlorophyll b</name>
        <dbReference type="ChEBI" id="CHEBI:30034"/>
    </ligand>
    <ligandPart>
        <name>Mg</name>
        <dbReference type="ChEBI" id="CHEBI:25107"/>
    </ligandPart>
</feature>
<feature type="binding site" evidence="1">
    <location>
        <position position="191"/>
    </location>
    <ligand>
        <name>Fe cation</name>
        <dbReference type="ChEBI" id="CHEBI:24875"/>
    </ligand>
</feature>
<feature type="binding site" evidence="1">
    <location>
        <position position="217"/>
    </location>
    <ligand>
        <name>a ubiquinone</name>
        <dbReference type="ChEBI" id="CHEBI:16389"/>
    </ligand>
</feature>
<feature type="binding site" evidence="1">
    <location>
        <position position="231"/>
    </location>
    <ligand>
        <name>Fe cation</name>
        <dbReference type="ChEBI" id="CHEBI:24875"/>
    </ligand>
</feature>
<feature type="sequence variant" description="Increases resistance to terbutryn 300-fold, slightly increases resistance to atrazine and o-phenanthroline." evidence="3">
    <original>G</original>
    <variation>D</variation>
    <location>
        <position position="193"/>
    </location>
</feature>
<proteinExistence type="inferred from homology"/>
<organism>
    <name type="scientific">Rubrivivax gelatinosus</name>
    <name type="common">Rhodocyclus gelatinosus</name>
    <name type="synonym">Rhodopseudomonas gelatinosa</name>
    <dbReference type="NCBI Taxonomy" id="28068"/>
    <lineage>
        <taxon>Bacteria</taxon>
        <taxon>Pseudomonadati</taxon>
        <taxon>Pseudomonadota</taxon>
        <taxon>Betaproteobacteria</taxon>
        <taxon>Burkholderiales</taxon>
        <taxon>Sphaerotilaceae</taxon>
        <taxon>Rubrivivax</taxon>
    </lineage>
</organism>
<dbReference type="EMBL" id="AH012710">
    <property type="protein sequence ID" value="AAB41576.1"/>
    <property type="molecule type" value="Genomic_DNA"/>
</dbReference>
<dbReference type="PIR" id="S68239">
    <property type="entry name" value="S68239"/>
</dbReference>
<dbReference type="SMR" id="P0DJO2"/>
<dbReference type="GO" id="GO:0005886">
    <property type="term" value="C:plasma membrane"/>
    <property type="evidence" value="ECO:0007669"/>
    <property type="project" value="UniProtKB-SubCell"/>
</dbReference>
<dbReference type="GO" id="GO:0030077">
    <property type="term" value="C:plasma membrane light-harvesting complex"/>
    <property type="evidence" value="ECO:0007669"/>
    <property type="project" value="InterPro"/>
</dbReference>
<dbReference type="GO" id="GO:0042314">
    <property type="term" value="F:bacteriochlorophyll binding"/>
    <property type="evidence" value="ECO:0007669"/>
    <property type="project" value="UniProtKB-KW"/>
</dbReference>
<dbReference type="GO" id="GO:0045156">
    <property type="term" value="F:electron transporter, transferring electrons within the cyclic electron transport pathway of photosynthesis activity"/>
    <property type="evidence" value="ECO:0007669"/>
    <property type="project" value="InterPro"/>
</dbReference>
<dbReference type="GO" id="GO:0046872">
    <property type="term" value="F:metal ion binding"/>
    <property type="evidence" value="ECO:0007669"/>
    <property type="project" value="UniProtKB-KW"/>
</dbReference>
<dbReference type="GO" id="GO:0009772">
    <property type="term" value="P:photosynthetic electron transport in photosystem II"/>
    <property type="evidence" value="ECO:0007669"/>
    <property type="project" value="InterPro"/>
</dbReference>
<dbReference type="GO" id="GO:0009635">
    <property type="term" value="P:response to herbicide"/>
    <property type="evidence" value="ECO:0007669"/>
    <property type="project" value="UniProtKB-KW"/>
</dbReference>
<dbReference type="CDD" id="cd09290">
    <property type="entry name" value="Photo-RC_L"/>
    <property type="match status" value="1"/>
</dbReference>
<dbReference type="Gene3D" id="1.20.85.10">
    <property type="entry name" value="Photosystem II protein D1-like"/>
    <property type="match status" value="2"/>
</dbReference>
<dbReference type="InterPro" id="IPR036854">
    <property type="entry name" value="Photo_II_D1/D2_sf"/>
</dbReference>
<dbReference type="InterPro" id="IPR005871">
    <property type="entry name" value="Photo_RC_L"/>
</dbReference>
<dbReference type="InterPro" id="IPR000484">
    <property type="entry name" value="Photo_RC_L/M"/>
</dbReference>
<dbReference type="InterPro" id="IPR055265">
    <property type="entry name" value="Photo_RC_L/M_CS"/>
</dbReference>
<dbReference type="NCBIfam" id="TIGR01157">
    <property type="entry name" value="pufL"/>
    <property type="match status" value="1"/>
</dbReference>
<dbReference type="Pfam" id="PF00124">
    <property type="entry name" value="Photo_RC"/>
    <property type="match status" value="1"/>
</dbReference>
<dbReference type="PRINTS" id="PR00256">
    <property type="entry name" value="REACTNCENTRE"/>
</dbReference>
<dbReference type="SUPFAM" id="SSF81483">
    <property type="entry name" value="Bacterial photosystem II reaction centre, L and M subunits"/>
    <property type="match status" value="1"/>
</dbReference>
<dbReference type="PROSITE" id="PS00244">
    <property type="entry name" value="REACTION_CENTER"/>
    <property type="match status" value="1"/>
</dbReference>
<reference key="1">
    <citation type="journal article" date="1995" name="FEBS Lett.">
        <title>A new mutation in the pufL gene responsible for the terbutryn resistance phenotype in Rubrivivax gelatinosus.</title>
        <authorList>
            <person name="Ouchane S."/>
            <person name="Picaud M."/>
            <person name="Astier C."/>
        </authorList>
    </citation>
    <scope>NUCLEOTIDE SEQUENCE [GENOMIC DNA]</scope>
    <scope>VARIANT HERBICIDE RESISTANT ASP-193</scope>
    <source>
        <strain>S1</strain>
    </source>
</reference>
<reference key="2">
    <citation type="journal article" date="1996" name="Mol. Gen. Genet.">
        <title>Development of gene transfer methods for Rubrivivax gelatinosus S1: construction, characterization and complementation of a puf operon deletion strain.</title>
        <authorList>
            <person name="Ouchane S."/>
            <person name="Picaud M."/>
            <person name="Reiss-Husson F."/>
            <person name="Vernotte C."/>
            <person name="Astier C."/>
        </authorList>
    </citation>
    <scope>NUCLEOTIDE SEQUENCE [GENOMIC DNA]</scope>
    <source>
        <strain>S1</strain>
    </source>
</reference>
<keyword id="KW-0076">Bacteriochlorophyll</keyword>
<keyword id="KW-0997">Cell inner membrane</keyword>
<keyword id="KW-1003">Cell membrane</keyword>
<keyword id="KW-0148">Chlorophyll</keyword>
<keyword id="KW-0157">Chromophore</keyword>
<keyword id="KW-0249">Electron transport</keyword>
<keyword id="KW-0359">Herbicide resistance</keyword>
<keyword id="KW-0408">Iron</keyword>
<keyword id="KW-0460">Magnesium</keyword>
<keyword id="KW-0472">Membrane</keyword>
<keyword id="KW-0479">Metal-binding</keyword>
<keyword id="KW-0602">Photosynthesis</keyword>
<keyword id="KW-0674">Reaction center</keyword>
<keyword id="KW-0812">Transmembrane</keyword>
<keyword id="KW-1133">Transmembrane helix</keyword>
<keyword id="KW-0813">Transport</keyword>
<name>RCEL_RUBGE</name>